<keyword id="KW-0223">Dioxygenase</keyword>
<keyword id="KW-0408">Iron</keyword>
<keyword id="KW-0479">Metal-binding</keyword>
<keyword id="KW-0560">Oxidoreductase</keyword>
<keyword id="KW-0847">Vitamin C</keyword>
<feature type="chain" id="PRO_0000346514" description="PKHD-type hydroxylase Reut_A2877">
    <location>
        <begin position="1"/>
        <end position="228"/>
    </location>
</feature>
<feature type="domain" description="Fe2OG dioxygenase" evidence="1">
    <location>
        <begin position="80"/>
        <end position="180"/>
    </location>
</feature>
<feature type="binding site" evidence="1">
    <location>
        <position position="98"/>
    </location>
    <ligand>
        <name>Fe cation</name>
        <dbReference type="ChEBI" id="CHEBI:24875"/>
    </ligand>
</feature>
<feature type="binding site" evidence="1">
    <location>
        <position position="100"/>
    </location>
    <ligand>
        <name>Fe cation</name>
        <dbReference type="ChEBI" id="CHEBI:24875"/>
    </ligand>
</feature>
<feature type="binding site" evidence="1">
    <location>
        <position position="161"/>
    </location>
    <ligand>
        <name>Fe cation</name>
        <dbReference type="ChEBI" id="CHEBI:24875"/>
    </ligand>
</feature>
<feature type="binding site" evidence="1">
    <location>
        <position position="171"/>
    </location>
    <ligand>
        <name>2-oxoglutarate</name>
        <dbReference type="ChEBI" id="CHEBI:16810"/>
    </ligand>
</feature>
<dbReference type="EC" id="1.14.11.-" evidence="1"/>
<dbReference type="EMBL" id="CP000090">
    <property type="protein sequence ID" value="AAZ62238.1"/>
    <property type="molecule type" value="Genomic_DNA"/>
</dbReference>
<dbReference type="SMR" id="Q46X95"/>
<dbReference type="STRING" id="264198.Reut_A2877"/>
<dbReference type="DNASU" id="3611015"/>
<dbReference type="KEGG" id="reu:Reut_A2877"/>
<dbReference type="eggNOG" id="COG3128">
    <property type="taxonomic scope" value="Bacteria"/>
</dbReference>
<dbReference type="HOGENOM" id="CLU_106663_0_0_4"/>
<dbReference type="OrthoDB" id="9812472at2"/>
<dbReference type="GO" id="GO:0016706">
    <property type="term" value="F:2-oxoglutarate-dependent dioxygenase activity"/>
    <property type="evidence" value="ECO:0007669"/>
    <property type="project" value="UniProtKB-UniRule"/>
</dbReference>
<dbReference type="GO" id="GO:0005506">
    <property type="term" value="F:iron ion binding"/>
    <property type="evidence" value="ECO:0007669"/>
    <property type="project" value="UniProtKB-UniRule"/>
</dbReference>
<dbReference type="GO" id="GO:0031418">
    <property type="term" value="F:L-ascorbic acid binding"/>
    <property type="evidence" value="ECO:0007669"/>
    <property type="project" value="UniProtKB-KW"/>
</dbReference>
<dbReference type="GO" id="GO:0006974">
    <property type="term" value="P:DNA damage response"/>
    <property type="evidence" value="ECO:0007669"/>
    <property type="project" value="TreeGrafter"/>
</dbReference>
<dbReference type="GO" id="GO:0006879">
    <property type="term" value="P:intracellular iron ion homeostasis"/>
    <property type="evidence" value="ECO:0007669"/>
    <property type="project" value="TreeGrafter"/>
</dbReference>
<dbReference type="Gene3D" id="2.60.120.620">
    <property type="entry name" value="q2cbj1_9rhob like domain"/>
    <property type="match status" value="1"/>
</dbReference>
<dbReference type="Gene3D" id="4.10.860.20">
    <property type="entry name" value="Rabenosyn, Rab binding domain"/>
    <property type="match status" value="1"/>
</dbReference>
<dbReference type="HAMAP" id="MF_00657">
    <property type="entry name" value="Hydroxyl_YbiX"/>
    <property type="match status" value="1"/>
</dbReference>
<dbReference type="InterPro" id="IPR005123">
    <property type="entry name" value="Oxoglu/Fe-dep_dioxygenase_dom"/>
</dbReference>
<dbReference type="InterPro" id="IPR041097">
    <property type="entry name" value="PKHD_C"/>
</dbReference>
<dbReference type="InterPro" id="IPR023550">
    <property type="entry name" value="PKHD_hydroxylase"/>
</dbReference>
<dbReference type="InterPro" id="IPR006620">
    <property type="entry name" value="Pro_4_hyd_alph"/>
</dbReference>
<dbReference type="InterPro" id="IPR044862">
    <property type="entry name" value="Pro_4_hyd_alph_FE2OG_OXY"/>
</dbReference>
<dbReference type="NCBIfam" id="NF003974">
    <property type="entry name" value="PRK05467.1-3"/>
    <property type="match status" value="1"/>
</dbReference>
<dbReference type="NCBIfam" id="NF003975">
    <property type="entry name" value="PRK05467.1-4"/>
    <property type="match status" value="1"/>
</dbReference>
<dbReference type="PANTHER" id="PTHR41536">
    <property type="entry name" value="PKHD-TYPE HYDROXYLASE YBIX"/>
    <property type="match status" value="1"/>
</dbReference>
<dbReference type="PANTHER" id="PTHR41536:SF1">
    <property type="entry name" value="PKHD-TYPE HYDROXYLASE YBIX"/>
    <property type="match status" value="1"/>
</dbReference>
<dbReference type="Pfam" id="PF13640">
    <property type="entry name" value="2OG-FeII_Oxy_3"/>
    <property type="match status" value="1"/>
</dbReference>
<dbReference type="Pfam" id="PF18331">
    <property type="entry name" value="PKHD_C"/>
    <property type="match status" value="1"/>
</dbReference>
<dbReference type="SMART" id="SM00702">
    <property type="entry name" value="P4Hc"/>
    <property type="match status" value="1"/>
</dbReference>
<dbReference type="SUPFAM" id="SSF51197">
    <property type="entry name" value="Clavaminate synthase-like"/>
    <property type="match status" value="1"/>
</dbReference>
<dbReference type="PROSITE" id="PS51471">
    <property type="entry name" value="FE2OG_OXY"/>
    <property type="match status" value="1"/>
</dbReference>
<comment type="cofactor">
    <cofactor evidence="1">
        <name>Fe(2+)</name>
        <dbReference type="ChEBI" id="CHEBI:29033"/>
    </cofactor>
    <text evidence="1">Binds 1 Fe(2+) ion per subunit.</text>
</comment>
<comment type="cofactor">
    <cofactor evidence="1">
        <name>L-ascorbate</name>
        <dbReference type="ChEBI" id="CHEBI:38290"/>
    </cofactor>
</comment>
<gene>
    <name type="ordered locus">Reut_A2877</name>
</gene>
<sequence length="228" mass="25627">MLVVIPQVLNAEQVGAVRERLEHAGEAWVDGRVTAGYSGAPVKFNQQIDERSDVALECQRLILGMLERNPRFISAALPNIVYPPMFNRYSEGMTFGAHVDGSVRIHPHDGRKLRTDISATLFLSPHDSYDGGELQVQDTYGMHSVKLDAGDMVVYPATSLHQVTPITRGTRVASFFWIQSLIRDDTQRSLLFDMDNAIQRLNQTGADEEARRTLVGCYHNLLRQWSET</sequence>
<organism>
    <name type="scientific">Cupriavidus pinatubonensis (strain JMP 134 / LMG 1197)</name>
    <name type="common">Cupriavidus necator (strain JMP 134)</name>
    <dbReference type="NCBI Taxonomy" id="264198"/>
    <lineage>
        <taxon>Bacteria</taxon>
        <taxon>Pseudomonadati</taxon>
        <taxon>Pseudomonadota</taxon>
        <taxon>Betaproteobacteria</taxon>
        <taxon>Burkholderiales</taxon>
        <taxon>Burkholderiaceae</taxon>
        <taxon>Cupriavidus</taxon>
    </lineage>
</organism>
<proteinExistence type="inferred from homology"/>
<name>Y2877_CUPPJ</name>
<evidence type="ECO:0000255" key="1">
    <source>
        <dbReference type="HAMAP-Rule" id="MF_00657"/>
    </source>
</evidence>
<protein>
    <recommendedName>
        <fullName evidence="1">PKHD-type hydroxylase Reut_A2877</fullName>
        <ecNumber evidence="1">1.14.11.-</ecNumber>
    </recommendedName>
</protein>
<reference key="1">
    <citation type="journal article" date="2010" name="PLoS ONE">
        <title>The complete multipartite genome sequence of Cupriavidus necator JMP134, a versatile pollutant degrader.</title>
        <authorList>
            <person name="Lykidis A."/>
            <person name="Perez-Pantoja D."/>
            <person name="Ledger T."/>
            <person name="Mavromatis K."/>
            <person name="Anderson I.J."/>
            <person name="Ivanova N.N."/>
            <person name="Hooper S.D."/>
            <person name="Lapidus A."/>
            <person name="Lucas S."/>
            <person name="Gonzalez B."/>
            <person name="Kyrpides N.C."/>
        </authorList>
    </citation>
    <scope>NUCLEOTIDE SEQUENCE [LARGE SCALE GENOMIC DNA]</scope>
    <source>
        <strain>JMP134 / LMG 1197</strain>
    </source>
</reference>
<accession>Q46X95</accession>